<name>EFG1P_CRYNB</name>
<proteinExistence type="inferred from homology"/>
<evidence type="ECO:0000250" key="1"/>
<evidence type="ECO:0000255" key="2"/>
<evidence type="ECO:0000256" key="3">
    <source>
        <dbReference type="SAM" id="MobiDB-lite"/>
    </source>
</evidence>
<evidence type="ECO:0000305" key="4"/>
<sequence>MPADKKQRKGAHPYRKPRPNPSDPSSSDKPARPKPTHRIPATEARDGAGIPGLSKLKSSIRQTKRLLAKENLEPGLRVSTQRRLTSLEADLAAAERREVERKNGAKYHKVKFFERQKLVRLIKRFKRKLLDSETSSKKRSKHEEELLDARIMLNYVLHYPNTQKYISLFPSNPNQTEDEDDDDDSSKPKLKLPPLLHPVPSTEECEKMDKPTKRRYDLLLETKRLMEESKLKSEPETDLKKGQVDGVVVGLGADVQIGLGDKKEAKQNAAQGTGEEEDDFFESGDE</sequence>
<gene>
    <name type="primary">EFG1</name>
    <name type="ordered locus">CNBN1340</name>
</gene>
<comment type="function">
    <text evidence="1">Involved in rRNA processing.</text>
</comment>
<comment type="subcellular location">
    <subcellularLocation>
        <location evidence="1">Nucleus</location>
        <location evidence="1">Nucleolus</location>
    </subcellularLocation>
</comment>
<comment type="similarity">
    <text evidence="4">Belongs to the EFG1 family.</text>
</comment>
<comment type="sequence caution" evidence="4">
    <conflict type="erroneous gene model prediction">
        <sequence resource="EMBL-CDS" id="EAL17307"/>
    </conflict>
</comment>
<dbReference type="EMBL" id="AAEY01000066">
    <property type="protein sequence ID" value="EAL17307.1"/>
    <property type="status" value="ALT_SEQ"/>
    <property type="molecule type" value="Genomic_DNA"/>
</dbReference>
<dbReference type="RefSeq" id="XP_771954.1">
    <property type="nucleotide sequence ID" value="XM_766861.1"/>
</dbReference>
<dbReference type="SMR" id="P0CN35"/>
<dbReference type="EnsemblFungi" id="AAW47082">
    <property type="protein sequence ID" value="AAW47082"/>
    <property type="gene ID" value="CNN01370"/>
</dbReference>
<dbReference type="GeneID" id="4939744"/>
<dbReference type="KEGG" id="cnb:CNBN1340"/>
<dbReference type="HOGENOM" id="CLU_066912_2_0_1"/>
<dbReference type="OrthoDB" id="8573at5206"/>
<dbReference type="GO" id="GO:0005730">
    <property type="term" value="C:nucleolus"/>
    <property type="evidence" value="ECO:0007669"/>
    <property type="project" value="UniProtKB-SubCell"/>
</dbReference>
<dbReference type="GO" id="GO:0030688">
    <property type="term" value="C:preribosome, small subunit precursor"/>
    <property type="evidence" value="ECO:0007669"/>
    <property type="project" value="TreeGrafter"/>
</dbReference>
<dbReference type="GO" id="GO:0000462">
    <property type="term" value="P:maturation of SSU-rRNA from tricistronic rRNA transcript (SSU-rRNA, 5.8S rRNA, LSU-rRNA)"/>
    <property type="evidence" value="ECO:0007669"/>
    <property type="project" value="TreeGrafter"/>
</dbReference>
<dbReference type="InterPro" id="IPR019310">
    <property type="entry name" value="Efg1"/>
</dbReference>
<dbReference type="InterPro" id="IPR050786">
    <property type="entry name" value="EFG1_rRNA-proc"/>
</dbReference>
<dbReference type="PANTHER" id="PTHR33911">
    <property type="entry name" value="RRNA-PROCESSING PROTEIN EFG1"/>
    <property type="match status" value="1"/>
</dbReference>
<dbReference type="PANTHER" id="PTHR33911:SF1">
    <property type="entry name" value="RRNA-PROCESSING PROTEIN EFG1"/>
    <property type="match status" value="1"/>
</dbReference>
<dbReference type="Pfam" id="PF10153">
    <property type="entry name" value="Efg1"/>
    <property type="match status" value="1"/>
</dbReference>
<organism>
    <name type="scientific">Cryptococcus neoformans var. neoformans serotype D (strain B-3501A)</name>
    <name type="common">Filobasidiella neoformans</name>
    <dbReference type="NCBI Taxonomy" id="283643"/>
    <lineage>
        <taxon>Eukaryota</taxon>
        <taxon>Fungi</taxon>
        <taxon>Dikarya</taxon>
        <taxon>Basidiomycota</taxon>
        <taxon>Agaricomycotina</taxon>
        <taxon>Tremellomycetes</taxon>
        <taxon>Tremellales</taxon>
        <taxon>Cryptococcaceae</taxon>
        <taxon>Cryptococcus</taxon>
        <taxon>Cryptococcus neoformans species complex</taxon>
    </lineage>
</organism>
<keyword id="KW-0175">Coiled coil</keyword>
<keyword id="KW-0539">Nucleus</keyword>
<keyword id="KW-0698">rRNA processing</keyword>
<accession>P0CN35</accession>
<accession>Q55HI6</accession>
<accession>Q5K724</accession>
<reference key="1">
    <citation type="journal article" date="2005" name="Science">
        <title>The genome of the basidiomycetous yeast and human pathogen Cryptococcus neoformans.</title>
        <authorList>
            <person name="Loftus B.J."/>
            <person name="Fung E."/>
            <person name="Roncaglia P."/>
            <person name="Rowley D."/>
            <person name="Amedeo P."/>
            <person name="Bruno D."/>
            <person name="Vamathevan J."/>
            <person name="Miranda M."/>
            <person name="Anderson I.J."/>
            <person name="Fraser J.A."/>
            <person name="Allen J.E."/>
            <person name="Bosdet I.E."/>
            <person name="Brent M.R."/>
            <person name="Chiu R."/>
            <person name="Doering T.L."/>
            <person name="Donlin M.J."/>
            <person name="D'Souza C.A."/>
            <person name="Fox D.S."/>
            <person name="Grinberg V."/>
            <person name="Fu J."/>
            <person name="Fukushima M."/>
            <person name="Haas B.J."/>
            <person name="Huang J.C."/>
            <person name="Janbon G."/>
            <person name="Jones S.J.M."/>
            <person name="Koo H.L."/>
            <person name="Krzywinski M.I."/>
            <person name="Kwon-Chung K.J."/>
            <person name="Lengeler K.B."/>
            <person name="Maiti R."/>
            <person name="Marra M.A."/>
            <person name="Marra R.E."/>
            <person name="Mathewson C.A."/>
            <person name="Mitchell T.G."/>
            <person name="Pertea M."/>
            <person name="Riggs F.R."/>
            <person name="Salzberg S.L."/>
            <person name="Schein J.E."/>
            <person name="Shvartsbeyn A."/>
            <person name="Shin H."/>
            <person name="Shumway M."/>
            <person name="Specht C.A."/>
            <person name="Suh B.B."/>
            <person name="Tenney A."/>
            <person name="Utterback T.R."/>
            <person name="Wickes B.L."/>
            <person name="Wortman J.R."/>
            <person name="Wye N.H."/>
            <person name="Kronstad J.W."/>
            <person name="Lodge J.K."/>
            <person name="Heitman J."/>
            <person name="Davis R.W."/>
            <person name="Fraser C.M."/>
            <person name="Hyman R.W."/>
        </authorList>
    </citation>
    <scope>NUCLEOTIDE SEQUENCE [LARGE SCALE GENOMIC DNA]</scope>
    <source>
        <strain>B-3501A</strain>
    </source>
</reference>
<feature type="chain" id="PRO_0000410071" description="rRNA-processing protein EFG1">
    <location>
        <begin position="1"/>
        <end position="286"/>
    </location>
</feature>
<feature type="region of interest" description="Disordered" evidence="3">
    <location>
        <begin position="1"/>
        <end position="57"/>
    </location>
</feature>
<feature type="region of interest" description="Disordered" evidence="3">
    <location>
        <begin position="167"/>
        <end position="213"/>
    </location>
</feature>
<feature type="region of interest" description="Disordered" evidence="3">
    <location>
        <begin position="259"/>
        <end position="286"/>
    </location>
</feature>
<feature type="coiled-coil region" evidence="2">
    <location>
        <begin position="53"/>
        <end position="103"/>
    </location>
</feature>
<feature type="compositionally biased region" description="Basic residues" evidence="3">
    <location>
        <begin position="1"/>
        <end position="18"/>
    </location>
</feature>
<feature type="compositionally biased region" description="Basic and acidic residues" evidence="3">
    <location>
        <begin position="204"/>
        <end position="213"/>
    </location>
</feature>
<feature type="compositionally biased region" description="Acidic residues" evidence="3">
    <location>
        <begin position="274"/>
        <end position="286"/>
    </location>
</feature>
<protein>
    <recommendedName>
        <fullName>rRNA-processing protein EFG1</fullName>
    </recommendedName>
</protein>